<name>DHAS_SHEVD</name>
<feature type="chain" id="PRO_0000141390" description="Aspartate-semialdehyde dehydrogenase">
    <location>
        <begin position="1"/>
        <end position="338"/>
    </location>
</feature>
<feature type="active site" description="Acyl-thioester intermediate" evidence="1">
    <location>
        <position position="132"/>
    </location>
</feature>
<feature type="active site" description="Proton acceptor" evidence="1">
    <location>
        <position position="245"/>
    </location>
</feature>
<feature type="binding site" evidence="1">
    <location>
        <begin position="13"/>
        <end position="16"/>
    </location>
    <ligand>
        <name>NADP(+)</name>
        <dbReference type="ChEBI" id="CHEBI:58349"/>
    </ligand>
</feature>
<feature type="binding site" evidence="1">
    <location>
        <begin position="41"/>
        <end position="42"/>
    </location>
    <ligand>
        <name>NADP(+)</name>
        <dbReference type="ChEBI" id="CHEBI:58349"/>
    </ligand>
</feature>
<feature type="binding site" evidence="1">
    <location>
        <position position="101"/>
    </location>
    <ligand>
        <name>phosphate</name>
        <dbReference type="ChEBI" id="CHEBI:43474"/>
    </ligand>
</feature>
<feature type="binding site" evidence="1">
    <location>
        <position position="159"/>
    </location>
    <ligand>
        <name>substrate</name>
    </ligand>
</feature>
<feature type="binding site" evidence="1">
    <location>
        <begin position="162"/>
        <end position="163"/>
    </location>
    <ligand>
        <name>NADP(+)</name>
        <dbReference type="ChEBI" id="CHEBI:58349"/>
    </ligand>
</feature>
<feature type="binding site" evidence="1">
    <location>
        <position position="216"/>
    </location>
    <ligand>
        <name>phosphate</name>
        <dbReference type="ChEBI" id="CHEBI:43474"/>
    </ligand>
</feature>
<feature type="binding site" evidence="1">
    <location>
        <position position="238"/>
    </location>
    <ligand>
        <name>substrate</name>
    </ligand>
</feature>
<feature type="binding site" evidence="1">
    <location>
        <position position="317"/>
    </location>
    <ligand>
        <name>NADP(+)</name>
        <dbReference type="ChEBI" id="CHEBI:58349"/>
    </ligand>
</feature>
<feature type="sequence conflict" description="In Ref. 1; BAA08490." evidence="2" ref="1">
    <original>Q</original>
    <variation>H</variation>
    <location>
        <position position="181"/>
    </location>
</feature>
<gene>
    <name evidence="1" type="primary">asd</name>
    <name type="ordered locus">SVI_2879</name>
</gene>
<accession>Q56734</accession>
<accession>D4ZMF1</accession>
<organism>
    <name type="scientific">Shewanella violacea (strain JCM 10179 / CIP 106290 / LMG 19151 / DSS12)</name>
    <dbReference type="NCBI Taxonomy" id="637905"/>
    <lineage>
        <taxon>Bacteria</taxon>
        <taxon>Pseudomonadati</taxon>
        <taxon>Pseudomonadota</taxon>
        <taxon>Gammaproteobacteria</taxon>
        <taxon>Alteromonadales</taxon>
        <taxon>Shewanellaceae</taxon>
        <taxon>Shewanella</taxon>
    </lineage>
</organism>
<dbReference type="EC" id="1.2.1.11" evidence="1"/>
<dbReference type="EMBL" id="D49540">
    <property type="protein sequence ID" value="BAA08490.1"/>
    <property type="molecule type" value="Genomic_DNA"/>
</dbReference>
<dbReference type="EMBL" id="AP011177">
    <property type="protein sequence ID" value="BAJ02850.1"/>
    <property type="molecule type" value="Genomic_DNA"/>
</dbReference>
<dbReference type="PIR" id="JC5436">
    <property type="entry name" value="JC5436"/>
</dbReference>
<dbReference type="RefSeq" id="WP_013052149.1">
    <property type="nucleotide sequence ID" value="NC_014012.1"/>
</dbReference>
<dbReference type="SMR" id="Q56734"/>
<dbReference type="STRING" id="637905.SVI_2879"/>
<dbReference type="KEGG" id="svo:SVI_2879"/>
<dbReference type="eggNOG" id="COG0136">
    <property type="taxonomic scope" value="Bacteria"/>
</dbReference>
<dbReference type="HOGENOM" id="CLU_049966_0_1_6"/>
<dbReference type="OrthoDB" id="9805684at2"/>
<dbReference type="UniPathway" id="UPA00034">
    <property type="reaction ID" value="UER00016"/>
</dbReference>
<dbReference type="UniPathway" id="UPA00050">
    <property type="reaction ID" value="UER00463"/>
</dbReference>
<dbReference type="UniPathway" id="UPA00051">
    <property type="reaction ID" value="UER00464"/>
</dbReference>
<dbReference type="Proteomes" id="UP000002350">
    <property type="component" value="Chromosome"/>
</dbReference>
<dbReference type="GO" id="GO:0004073">
    <property type="term" value="F:aspartate-semialdehyde dehydrogenase activity"/>
    <property type="evidence" value="ECO:0007669"/>
    <property type="project" value="UniProtKB-UniRule"/>
</dbReference>
<dbReference type="GO" id="GO:0051287">
    <property type="term" value="F:NAD binding"/>
    <property type="evidence" value="ECO:0007669"/>
    <property type="project" value="InterPro"/>
</dbReference>
<dbReference type="GO" id="GO:0050661">
    <property type="term" value="F:NADP binding"/>
    <property type="evidence" value="ECO:0007669"/>
    <property type="project" value="UniProtKB-UniRule"/>
</dbReference>
<dbReference type="GO" id="GO:0046983">
    <property type="term" value="F:protein dimerization activity"/>
    <property type="evidence" value="ECO:0007669"/>
    <property type="project" value="InterPro"/>
</dbReference>
<dbReference type="GO" id="GO:0071266">
    <property type="term" value="P:'de novo' L-methionine biosynthetic process"/>
    <property type="evidence" value="ECO:0007669"/>
    <property type="project" value="UniProtKB-UniRule"/>
</dbReference>
<dbReference type="GO" id="GO:0019877">
    <property type="term" value="P:diaminopimelate biosynthetic process"/>
    <property type="evidence" value="ECO:0007669"/>
    <property type="project" value="UniProtKB-UniRule"/>
</dbReference>
<dbReference type="GO" id="GO:0009097">
    <property type="term" value="P:isoleucine biosynthetic process"/>
    <property type="evidence" value="ECO:0007669"/>
    <property type="project" value="InterPro"/>
</dbReference>
<dbReference type="GO" id="GO:0009089">
    <property type="term" value="P:lysine biosynthetic process via diaminopimelate"/>
    <property type="evidence" value="ECO:0007669"/>
    <property type="project" value="UniProtKB-UniRule"/>
</dbReference>
<dbReference type="GO" id="GO:0009088">
    <property type="term" value="P:threonine biosynthetic process"/>
    <property type="evidence" value="ECO:0007669"/>
    <property type="project" value="UniProtKB-UniRule"/>
</dbReference>
<dbReference type="CDD" id="cd18131">
    <property type="entry name" value="ASADH_C_bac_euk_like"/>
    <property type="match status" value="1"/>
</dbReference>
<dbReference type="CDD" id="cd02316">
    <property type="entry name" value="VcASADH2_like_N"/>
    <property type="match status" value="1"/>
</dbReference>
<dbReference type="Gene3D" id="3.30.360.10">
    <property type="entry name" value="Dihydrodipicolinate Reductase, domain 2"/>
    <property type="match status" value="1"/>
</dbReference>
<dbReference type="Gene3D" id="3.40.50.720">
    <property type="entry name" value="NAD(P)-binding Rossmann-like Domain"/>
    <property type="match status" value="1"/>
</dbReference>
<dbReference type="HAMAP" id="MF_02121">
    <property type="entry name" value="ASADH"/>
    <property type="match status" value="1"/>
</dbReference>
<dbReference type="InterPro" id="IPR012080">
    <property type="entry name" value="Asp_semialdehyde_DH"/>
</dbReference>
<dbReference type="InterPro" id="IPR005986">
    <property type="entry name" value="Asp_semialdehyde_DH_beta"/>
</dbReference>
<dbReference type="InterPro" id="IPR036291">
    <property type="entry name" value="NAD(P)-bd_dom_sf"/>
</dbReference>
<dbReference type="InterPro" id="IPR000534">
    <property type="entry name" value="Semialdehyde_DH_NAD-bd"/>
</dbReference>
<dbReference type="InterPro" id="IPR012280">
    <property type="entry name" value="Semialdhyde_DH_dimer_dom"/>
</dbReference>
<dbReference type="NCBIfam" id="TIGR01296">
    <property type="entry name" value="asd_B"/>
    <property type="match status" value="1"/>
</dbReference>
<dbReference type="NCBIfam" id="NF004224">
    <property type="entry name" value="PRK05671.1"/>
    <property type="match status" value="1"/>
</dbReference>
<dbReference type="NCBIfam" id="NF005957">
    <property type="entry name" value="PRK08040.1"/>
    <property type="match status" value="1"/>
</dbReference>
<dbReference type="NCBIfam" id="NF011456">
    <property type="entry name" value="PRK14874.1"/>
    <property type="match status" value="1"/>
</dbReference>
<dbReference type="PANTHER" id="PTHR46278:SF2">
    <property type="entry name" value="ASPARTATE-SEMIALDEHYDE DEHYDROGENASE"/>
    <property type="match status" value="1"/>
</dbReference>
<dbReference type="PANTHER" id="PTHR46278">
    <property type="entry name" value="DEHYDROGENASE, PUTATIVE-RELATED"/>
    <property type="match status" value="1"/>
</dbReference>
<dbReference type="Pfam" id="PF01118">
    <property type="entry name" value="Semialdhyde_dh"/>
    <property type="match status" value="1"/>
</dbReference>
<dbReference type="Pfam" id="PF02774">
    <property type="entry name" value="Semialdhyde_dhC"/>
    <property type="match status" value="1"/>
</dbReference>
<dbReference type="PIRSF" id="PIRSF000148">
    <property type="entry name" value="ASA_dh"/>
    <property type="match status" value="1"/>
</dbReference>
<dbReference type="SMART" id="SM00859">
    <property type="entry name" value="Semialdhyde_dh"/>
    <property type="match status" value="1"/>
</dbReference>
<dbReference type="SUPFAM" id="SSF55347">
    <property type="entry name" value="Glyceraldehyde-3-phosphate dehydrogenase-like, C-terminal domain"/>
    <property type="match status" value="1"/>
</dbReference>
<dbReference type="SUPFAM" id="SSF51735">
    <property type="entry name" value="NAD(P)-binding Rossmann-fold domains"/>
    <property type="match status" value="1"/>
</dbReference>
<proteinExistence type="inferred from homology"/>
<comment type="function">
    <text evidence="1">Catalyzes the NADPH-dependent formation of L-aspartate-semialdehyde (L-ASA) by the reductive dephosphorylation of L-aspartyl-4-phosphate.</text>
</comment>
<comment type="catalytic activity">
    <reaction evidence="1">
        <text>L-aspartate 4-semialdehyde + phosphate + NADP(+) = 4-phospho-L-aspartate + NADPH + H(+)</text>
        <dbReference type="Rhea" id="RHEA:24284"/>
        <dbReference type="ChEBI" id="CHEBI:15378"/>
        <dbReference type="ChEBI" id="CHEBI:43474"/>
        <dbReference type="ChEBI" id="CHEBI:57535"/>
        <dbReference type="ChEBI" id="CHEBI:57783"/>
        <dbReference type="ChEBI" id="CHEBI:58349"/>
        <dbReference type="ChEBI" id="CHEBI:537519"/>
        <dbReference type="EC" id="1.2.1.11"/>
    </reaction>
</comment>
<comment type="pathway">
    <text evidence="1">Amino-acid biosynthesis; L-lysine biosynthesis via DAP pathway; (S)-tetrahydrodipicolinate from L-aspartate: step 2/4.</text>
</comment>
<comment type="pathway">
    <text evidence="1">Amino-acid biosynthesis; L-methionine biosynthesis via de novo pathway; L-homoserine from L-aspartate: step 2/3.</text>
</comment>
<comment type="pathway">
    <text evidence="1">Amino-acid biosynthesis; L-threonine biosynthesis; L-threonine from L-aspartate: step 2/5.</text>
</comment>
<comment type="subunit">
    <text evidence="1">Homodimer.</text>
</comment>
<comment type="similarity">
    <text evidence="1">Belongs to the aspartate-semialdehyde dehydrogenase family.</text>
</comment>
<reference key="1">
    <citation type="journal article" date="1997" name="J. Biochem.">
        <title>Comparison of the gene expression of aspartate beta-D-semialdehyde dehydrogenase at elevated hydrostatic pressure in deep-sea bacteria.</title>
        <authorList>
            <person name="Kato C."/>
            <person name="Smorawinska M."/>
            <person name="Li L."/>
            <person name="Horikoshi K."/>
        </authorList>
    </citation>
    <scope>NUCLEOTIDE SEQUENCE [GENOMIC DNA]</scope>
</reference>
<reference key="2">
    <citation type="journal article" date="2010" name="Mol. Biosyst.">
        <title>Complete genome sequence and comparative analysis of Shewanella violacea, a psychrophilic and piezophilic bacterium from deep sea floor sediments.</title>
        <authorList>
            <person name="Aono E."/>
            <person name="Baba T."/>
            <person name="Ara T."/>
            <person name="Nishi T."/>
            <person name="Nakamichi T."/>
            <person name="Inamoto E."/>
            <person name="Toyonaga H."/>
            <person name="Hasegawa M."/>
            <person name="Takai Y."/>
            <person name="Okumura Y."/>
            <person name="Baba M."/>
            <person name="Tomita M."/>
            <person name="Kato C."/>
            <person name="Oshima T."/>
            <person name="Nakasone K."/>
            <person name="Mori H."/>
        </authorList>
    </citation>
    <scope>NUCLEOTIDE SEQUENCE [LARGE SCALE GENOMIC DNA]</scope>
    <source>
        <strain>JCM 10179 / CIP 106290 / LMG 19151 / DSS12</strain>
    </source>
</reference>
<sequence length="338" mass="37052">MSQEFNVVVLGASGAVGQTMIEILEERNFPVAKLFPLASSRSAGGTVSFNGKQVEILDVDDFDWSQAQIGFFSAGGDVSEKWAPIAAENGCVVIDNTSQFRYDNDVPLVIPEVNPEAIADFRNRNIIANPNCSTIQMLVALKPIYDAFGISRINVATYQSVSGSGKEAITELAGQCSKLLQGLPAESKVYPKQIAFNVLPQIDKFMENGYTKEEMKMVWETQKIFGDDNIVVNPTAVRVPVFYGHSEAIHLETIQPAEAEDVKAVLREAPGIELFESNEEYPTAVTESAGTDPVYVGRVRKDISHSHGINLWVVSDNIRKGAALNSVQIAEVLIRDYY</sequence>
<evidence type="ECO:0000255" key="1">
    <source>
        <dbReference type="HAMAP-Rule" id="MF_02121"/>
    </source>
</evidence>
<evidence type="ECO:0000305" key="2"/>
<keyword id="KW-0028">Amino-acid biosynthesis</keyword>
<keyword id="KW-0220">Diaminopimelate biosynthesis</keyword>
<keyword id="KW-0457">Lysine biosynthesis</keyword>
<keyword id="KW-0486">Methionine biosynthesis</keyword>
<keyword id="KW-0521">NADP</keyword>
<keyword id="KW-0560">Oxidoreductase</keyword>
<keyword id="KW-1185">Reference proteome</keyword>
<keyword id="KW-0791">Threonine biosynthesis</keyword>
<protein>
    <recommendedName>
        <fullName evidence="1">Aspartate-semialdehyde dehydrogenase</fullName>
        <shortName evidence="1">ASA dehydrogenase</shortName>
        <shortName evidence="1">ASADH</shortName>
        <ecNumber evidence="1">1.2.1.11</ecNumber>
    </recommendedName>
    <alternativeName>
        <fullName evidence="1">Aspartate-beta-semialdehyde dehydrogenase</fullName>
    </alternativeName>
</protein>